<evidence type="ECO:0000255" key="1">
    <source>
        <dbReference type="PROSITE-ProRule" id="PRU00030"/>
    </source>
</evidence>
<evidence type="ECO:0000255" key="2">
    <source>
        <dbReference type="PROSITE-ProRule" id="PRU00074"/>
    </source>
</evidence>
<evidence type="ECO:0000269" key="3">
    <source>
    </source>
</evidence>
<evidence type="ECO:0000269" key="4">
    <source>
    </source>
</evidence>
<evidence type="ECO:0000269" key="5">
    <source>
    </source>
</evidence>
<evidence type="ECO:0000269" key="6">
    <source>
    </source>
</evidence>
<evidence type="ECO:0000269" key="7">
    <source>
    </source>
</evidence>
<evidence type="ECO:0000269" key="8">
    <source>
    </source>
</evidence>
<evidence type="ECO:0000269" key="9">
    <source>
    </source>
</evidence>
<evidence type="ECO:0000269" key="10">
    <source>
    </source>
</evidence>
<evidence type="ECO:0000303" key="11">
    <source>
    </source>
</evidence>
<evidence type="ECO:0000303" key="12">
    <source>
    </source>
</evidence>
<reference key="1">
    <citation type="journal article" date="1996" name="DNA Res.">
        <title>A 718-kb DNA sequence of the Escherichia coli K-12 genome corresponding to the 12.7-28.0 min region on the linkage map.</title>
        <authorList>
            <person name="Oshima T."/>
            <person name="Aiba H."/>
            <person name="Baba T."/>
            <person name="Fujita K."/>
            <person name="Hayashi K."/>
            <person name="Honjo A."/>
            <person name="Ikemoto K."/>
            <person name="Inada T."/>
            <person name="Itoh T."/>
            <person name="Kajihara M."/>
            <person name="Kanai K."/>
            <person name="Kashimoto K."/>
            <person name="Kimura S."/>
            <person name="Kitagawa M."/>
            <person name="Makino K."/>
            <person name="Masuda S."/>
            <person name="Miki T."/>
            <person name="Mizobuchi K."/>
            <person name="Mori H."/>
            <person name="Motomura K."/>
            <person name="Nakamura Y."/>
            <person name="Nashimoto H."/>
            <person name="Nishio Y."/>
            <person name="Saito N."/>
            <person name="Sampei G."/>
            <person name="Seki Y."/>
            <person name="Tagami H."/>
            <person name="Takemoto K."/>
            <person name="Wada C."/>
            <person name="Yamamoto Y."/>
            <person name="Yano M."/>
            <person name="Horiuchi T."/>
        </authorList>
    </citation>
    <scope>NUCLEOTIDE SEQUENCE [LARGE SCALE GENOMIC DNA]</scope>
    <source>
        <strain>K12 / W3110 / ATCC 27325 / DSM 5911</strain>
    </source>
</reference>
<reference key="2">
    <citation type="journal article" date="1997" name="Science">
        <title>The complete genome sequence of Escherichia coli K-12.</title>
        <authorList>
            <person name="Blattner F.R."/>
            <person name="Plunkett G. III"/>
            <person name="Bloch C.A."/>
            <person name="Perna N.T."/>
            <person name="Burland V."/>
            <person name="Riley M."/>
            <person name="Collado-Vides J."/>
            <person name="Glasner J.D."/>
            <person name="Rode C.K."/>
            <person name="Mayhew G.F."/>
            <person name="Gregor J."/>
            <person name="Davis N.W."/>
            <person name="Kirkpatrick H.A."/>
            <person name="Goeden M.A."/>
            <person name="Rose D.J."/>
            <person name="Mau B."/>
            <person name="Shao Y."/>
        </authorList>
    </citation>
    <scope>NUCLEOTIDE SEQUENCE [LARGE SCALE GENOMIC DNA]</scope>
    <source>
        <strain>K12 / MG1655 / ATCC 47076</strain>
    </source>
</reference>
<reference key="3">
    <citation type="journal article" date="2006" name="Mol. Syst. Biol.">
        <title>Highly accurate genome sequences of Escherichia coli K-12 strains MG1655 and W3110.</title>
        <authorList>
            <person name="Hayashi K."/>
            <person name="Morooka N."/>
            <person name="Yamamoto Y."/>
            <person name="Fujita K."/>
            <person name="Isono K."/>
            <person name="Choi S."/>
            <person name="Ohtsubo E."/>
            <person name="Baba T."/>
            <person name="Wanner B.L."/>
            <person name="Mori H."/>
            <person name="Horiuchi T."/>
        </authorList>
    </citation>
    <scope>NUCLEOTIDE SEQUENCE [LARGE SCALE GENOMIC DNA]</scope>
    <source>
        <strain>K12 / W3110 / ATCC 27325 / DSM 5911</strain>
    </source>
</reference>
<reference key="4">
    <citation type="journal article" date="2003" name="Res. Microbiol.">
        <title>Changes in Escherichia coli transcriptome during acclimatization at low temperature.</title>
        <authorList>
            <person name="Polissi A."/>
            <person name="De Laurentis W."/>
            <person name="Zangrossi S."/>
            <person name="Briani F."/>
            <person name="Longhi V."/>
            <person name="Pesole G."/>
            <person name="Deho G."/>
        </authorList>
    </citation>
    <scope>INDUCTION BY COLD SHOCK</scope>
    <source>
        <strain>K12 / MG1655 / ATCC 47076</strain>
    </source>
</reference>
<reference key="5">
    <citation type="journal article" date="2004" name="Photochem. Photobiol.">
        <title>Purification and initial characterization of a putative blue light-regulated phosphodiesterase from Escherichia coli.</title>
        <authorList>
            <person name="Rajagopal S."/>
            <person name="Key J.M."/>
            <person name="Purcell E.B."/>
            <person name="Boerema D.J."/>
            <person name="Moffat K."/>
        </authorList>
    </citation>
    <scope>FAD-BINDING</scope>
    <scope>REVERSIBLE PHOTOCYCLE</scope>
    <scope>MONOMERIC SUBUNIT</scope>
</reference>
<reference key="6">
    <citation type="journal article" date="2006" name="Biochemistry">
        <title>Light induced structural changes of a full-length protein and its BLUF domain in YcgF(Blrp), a blue-light sensing protein that uses FAD (BLUF).</title>
        <authorList>
            <person name="Hasegawa K."/>
            <person name="Masuda S."/>
            <person name="Ono T.A."/>
        </authorList>
    </citation>
    <scope>LIGHT-INDUCED FOURIER TRANSFORM INFRARED (FTIR) DIFFERENCE SPECTROSCOPY</scope>
</reference>
<reference key="7">
    <citation type="journal article" date="2007" name="J. Am. Chem. Soc.">
        <title>Transient dimerization and conformational change of a BLUF protein: YcgF.</title>
        <authorList>
            <person name="Nakasone Y."/>
            <person name="Ono T.A."/>
            <person name="Ishii A."/>
            <person name="Masuda S."/>
            <person name="Terazima M."/>
        </authorList>
    </citation>
    <scope>TRANSIENT DIMERIZATION</scope>
</reference>
<reference key="8">
    <citation type="journal article" date="2008" name="ChemBioChem">
        <title>Influence of a joining helix on the BLUF domain of the YcgF photoreceptor from Escherichia coli.</title>
        <authorList>
            <person name="Schroeder C."/>
            <person name="Werner K."/>
            <person name="Otten H."/>
            <person name="Kratzig S."/>
            <person name="Schwalbe H."/>
            <person name="Essen L.O."/>
        </authorList>
    </citation>
    <scope>FLAVIN-BINDING TO THE BLUF DOMAIN</scope>
    <scope>IMPORTANCE OF THE JOINING HELIX</scope>
</reference>
<reference key="9">
    <citation type="journal article" date="2009" name="Genes Dev.">
        <title>The BLUF-EAL protein YcgF acts as a direct anti-repressor in a blue-light response of Escherichia coli.</title>
        <authorList>
            <person name="Tschowri N."/>
            <person name="Busse S."/>
            <person name="Hengge R."/>
        </authorList>
    </citation>
    <scope>LACK OF C-DI-GMP PHOSPHODIESTERASE ACTIVITY</scope>
    <scope>FUNCTION</scope>
    <scope>INTERACTION WITH BLUR</scope>
    <scope>MUTAGENESIS OF 193-ILE--GLN-195</scope>
    <scope>DISRUPTION PHENOTYPE</scope>
    <source>
        <strain>K12 / MC4100</strain>
    </source>
</reference>
<reference key="10">
    <citation type="journal article" date="2009" name="Microbiology">
        <title>Gene expression patterns and differential input into curli fimbriae regulation of all GGDEF/EAL domain proteins in Escherichia coli.</title>
        <authorList>
            <person name="Sommerfeldt N."/>
            <person name="Possling A."/>
            <person name="Becker G."/>
            <person name="Pesavento C."/>
            <person name="Tschowri N."/>
            <person name="Hengge R."/>
        </authorList>
    </citation>
    <scope>INDUCTION</scope>
    <scope>RPOS-REPRESSION</scope>
    <source>
        <strain>K12 / W3110 / ATCC 27325 / DSM 5911</strain>
    </source>
</reference>
<reference key="11">
    <citation type="journal article" date="2010" name="Biochemistry">
        <title>Temperature-sensitive reaction of a photosensor protein YcgF: possibility of a role of temperature sensor.</title>
        <authorList>
            <person name="Nakasone Y."/>
            <person name="Ono T.A."/>
            <person name="Ishii A."/>
            <person name="Masuda S."/>
            <person name="Terazima M."/>
        </authorList>
    </citation>
    <scope>CONFORMATION CHANGE AFTER PHOTOINDUCED DIMERIZATION</scope>
</reference>
<reference key="12">
    <citation type="journal article" date="2012" name="Mol. Microbiol.">
        <title>Molecular function and potential evolution of the biofilm-modulating blue light-signalling pathway of Escherichia coli.</title>
        <authorList>
            <person name="Tschowri N."/>
            <person name="Lindenberg S."/>
            <person name="Hengge R."/>
        </authorList>
    </citation>
    <scope>FUNCTION</scope>
    <scope>INTERACTION WITH BLUR AND MLRA</scope>
    <source>
        <strain>K12 / W3110 / ATCC 27325 / DSM 5911</strain>
    </source>
</reference>
<keyword id="KW-0157">Chromophore</keyword>
<keyword id="KW-0274">FAD</keyword>
<keyword id="KW-0285">Flavoprotein</keyword>
<keyword id="KW-0600">Photoreceptor protein</keyword>
<keyword id="KW-0675">Receptor</keyword>
<keyword id="KW-1185">Reference proteome</keyword>
<keyword id="KW-0716">Sensory transduction</keyword>
<feature type="chain" id="PRO_0000168852" description="Blue light- and temperature-regulated antirepressor BluF">
    <location>
        <begin position="1"/>
        <end position="403"/>
    </location>
</feature>
<feature type="domain" description="BLUF" evidence="1">
    <location>
        <begin position="2"/>
        <end position="93"/>
    </location>
</feature>
<feature type="domain" description="EAL" evidence="2">
    <location>
        <begin position="155"/>
        <end position="403"/>
    </location>
</feature>
<feature type="region of interest" description="Joining helix">
    <location>
        <begin position="98"/>
        <end position="144"/>
    </location>
</feature>
<feature type="mutagenesis site" description="Does not confer c-di-GMP phosphodiesterase activity." evidence="7">
    <original>IVQ</original>
    <variation>LVR</variation>
    <location>
        <begin position="193"/>
        <end position="195"/>
    </location>
</feature>
<name>BLUF_ECOLI</name>
<proteinExistence type="evidence at protein level"/>
<organism>
    <name type="scientific">Escherichia coli (strain K12)</name>
    <dbReference type="NCBI Taxonomy" id="83333"/>
    <lineage>
        <taxon>Bacteria</taxon>
        <taxon>Pseudomonadati</taxon>
        <taxon>Pseudomonadota</taxon>
        <taxon>Gammaproteobacteria</taxon>
        <taxon>Enterobacterales</taxon>
        <taxon>Enterobacteriaceae</taxon>
        <taxon>Escherichia</taxon>
    </lineage>
</organism>
<comment type="function">
    <text evidence="4 7 9 10">Binds to and releases the BluR repressor from its bound DNA target in a blue light-dependent (470 nm) fashion. A shift to low temperature also triggers a BluF-mediated relief of repression by BluR, suggesting BluF may serve as a thermometer. Blue light may act to increase the affinity of BluF for BluR, allowing it to be released from its operator. The protein has a reversible photocycle, and undergoes structural changes, probably in the EAL domain, in response to light.</text>
</comment>
<comment type="cofactor">
    <cofactor evidence="4">
        <name>FAD</name>
        <dbReference type="ChEBI" id="CHEBI:57692"/>
    </cofactor>
    <text evidence="4">Binds 1 FAD per subunit, non-covalently bound to the BLUF domain.</text>
</comment>
<comment type="subunit">
    <text evidence="4 5 7 9 10">Monomer, it undergoes transient dimerization following photoexcitation or upon temperature reduction, with a relaxation time of about 2 minutes. The dimer may be the inactive state. Interacts with the N- and C-terminal domains of BluR. Can also interact with the C-terminal domain of MlrA.</text>
</comment>
<comment type="induction">
    <text evidence="3 8">Expression is strongly activated by cold shock (over 30-fold at 16 degrees Celsius compared to 37 degrees) at low temperature in a PNPase-dependent fashion. Repressed by RpoS.</text>
</comment>
<comment type="domain">
    <text evidence="6">The joining helix is required for stability of the light-adapted state.</text>
</comment>
<comment type="domain">
    <text evidence="10">Contains a defective C-terminal cyclic-di-GMP phosphodiesterase EAL domain, which lacks key amino acids required for phosphodiesterase activity. Restoration of consensus amino acids in the degenerate EAL domain does not restore phosphodiesterase activity and reduces ability to antagonize BluR.</text>
</comment>
<comment type="disruption phenotype">
    <text evidence="7">Reduces expression of ycgZ in the presence but not the absence of BluR. At 16 degrees Celsius, reduces expression of genes (including ycgZ) for several small proteins. While the BluR/F system is induced at low temperatures under blue light irradiation, it is not essential for growth under these conditions.</text>
</comment>
<gene>
    <name evidence="12" type="primary">bluF</name>
    <name evidence="11" type="synonym">blrp</name>
    <name type="synonym">ycgF</name>
    <name type="ordered locus">b1163</name>
    <name type="ordered locus">JW1150</name>
</gene>
<protein>
    <recommendedName>
        <fullName>Blue light- and temperature-regulated antirepressor BluF</fullName>
        <shortName>Blrp</shortName>
    </recommendedName>
</protein>
<sequence>MLTTLIYRSHIRDDEPVKKIEEMVSIANRRNMQSDVTGILLFNGSHFFQLLEGPEEQVKMIYRAICQDPRHYNIVELLCDYAPARRFGKAGMELFDLRLHERDDVLQAVFDKGTSKFQLTYDDRALQFFRTFVLATEQSTYFEIPAEDSWLFIADGSDKELDSCALSPTINDHFAFHPIVDPLSRRIIAFEAIVQKNEDSPSAIAVGQRKDGEIYTADLKSKALAFTMAHALELGDKMISINLLPMTLVNEPDAVSFLLNEIKANALVPEQIIVEFTESEVISRFDEFAEAIKSLKAAGISVAIDHFGAGFAGLLLLSRFQPDRIKISQELITNVHKSGPRQAIIQAIIKCCTSLEIQVSAMGVATPEEWMWLESAGIEMFQGDLFAKAKLNGIPSIAWPEKK</sequence>
<accession>P75990</accession>
<dbReference type="EMBL" id="U00096">
    <property type="protein sequence ID" value="AAC74247.1"/>
    <property type="molecule type" value="Genomic_DNA"/>
</dbReference>
<dbReference type="EMBL" id="AP009048">
    <property type="protein sequence ID" value="BAA35998.1"/>
    <property type="molecule type" value="Genomic_DNA"/>
</dbReference>
<dbReference type="PIR" id="H64861">
    <property type="entry name" value="H64861"/>
</dbReference>
<dbReference type="RefSeq" id="NP_415681.1">
    <property type="nucleotide sequence ID" value="NC_000913.3"/>
</dbReference>
<dbReference type="RefSeq" id="WP_001299269.1">
    <property type="nucleotide sequence ID" value="NZ_STEB01000023.1"/>
</dbReference>
<dbReference type="SMR" id="P75990"/>
<dbReference type="BioGRID" id="4262864">
    <property type="interactions" value="27"/>
</dbReference>
<dbReference type="DIP" id="DIP-11553N"/>
<dbReference type="FunCoup" id="P75990">
    <property type="interactions" value="34"/>
</dbReference>
<dbReference type="IntAct" id="P75990">
    <property type="interactions" value="13"/>
</dbReference>
<dbReference type="STRING" id="511145.b1163"/>
<dbReference type="PaxDb" id="511145-b1163"/>
<dbReference type="EnsemblBacteria" id="AAC74247">
    <property type="protein sequence ID" value="AAC74247"/>
    <property type="gene ID" value="b1163"/>
</dbReference>
<dbReference type="GeneID" id="75203726"/>
<dbReference type="GeneID" id="947592"/>
<dbReference type="KEGG" id="ecj:JW1150"/>
<dbReference type="KEGG" id="eco:b1163"/>
<dbReference type="KEGG" id="ecoc:C3026_06855"/>
<dbReference type="PATRIC" id="fig|1411691.4.peg.1127"/>
<dbReference type="EchoBASE" id="EB3646"/>
<dbReference type="eggNOG" id="COG2200">
    <property type="taxonomic scope" value="Bacteria"/>
</dbReference>
<dbReference type="HOGENOM" id="CLU_000445_70_33_6"/>
<dbReference type="InParanoid" id="P75990"/>
<dbReference type="OMA" id="IYRSHIC"/>
<dbReference type="OrthoDB" id="1673646at2"/>
<dbReference type="PhylomeDB" id="P75990"/>
<dbReference type="BioCyc" id="EcoCyc:G6603-MONOMER"/>
<dbReference type="PRO" id="PR:P75990"/>
<dbReference type="Proteomes" id="UP000000625">
    <property type="component" value="Chromosome"/>
</dbReference>
<dbReference type="GO" id="GO:0005886">
    <property type="term" value="C:plasma membrane"/>
    <property type="evidence" value="ECO:0000318"/>
    <property type="project" value="GO_Central"/>
</dbReference>
<dbReference type="GO" id="GO:0009882">
    <property type="term" value="F:blue light photoreceptor activity"/>
    <property type="evidence" value="ECO:0007669"/>
    <property type="project" value="InterPro"/>
</dbReference>
<dbReference type="GO" id="GO:0071111">
    <property type="term" value="F:cyclic-guanylate-specific phosphodiesterase activity"/>
    <property type="evidence" value="ECO:0000318"/>
    <property type="project" value="GO_Central"/>
</dbReference>
<dbReference type="GO" id="GO:0140297">
    <property type="term" value="F:DNA-binding transcription factor binding"/>
    <property type="evidence" value="ECO:0000353"/>
    <property type="project" value="EcoCyc"/>
</dbReference>
<dbReference type="GO" id="GO:0071949">
    <property type="term" value="F:FAD binding"/>
    <property type="evidence" value="ECO:0007669"/>
    <property type="project" value="InterPro"/>
</dbReference>
<dbReference type="GO" id="GO:0050660">
    <property type="term" value="F:flavin adenine dinucleotide binding"/>
    <property type="evidence" value="ECO:0000314"/>
    <property type="project" value="EcoCyc"/>
</dbReference>
<dbReference type="GO" id="GO:1900190">
    <property type="term" value="P:regulation of single-species biofilm formation"/>
    <property type="evidence" value="ECO:0000318"/>
    <property type="project" value="GO_Central"/>
</dbReference>
<dbReference type="GO" id="GO:0009637">
    <property type="term" value="P:response to blue light"/>
    <property type="evidence" value="ECO:0000314"/>
    <property type="project" value="EcoCyc"/>
</dbReference>
<dbReference type="CDD" id="cd01948">
    <property type="entry name" value="EAL"/>
    <property type="match status" value="1"/>
</dbReference>
<dbReference type="FunFam" id="3.20.20.450:FF:000006">
    <property type="entry name" value="Cyclic diguanylate phosphodiesterase (EAL) domain protein"/>
    <property type="match status" value="1"/>
</dbReference>
<dbReference type="Gene3D" id="3.30.70.100">
    <property type="match status" value="1"/>
</dbReference>
<dbReference type="Gene3D" id="3.20.20.450">
    <property type="entry name" value="EAL domain"/>
    <property type="match status" value="1"/>
</dbReference>
<dbReference type="InterPro" id="IPR036046">
    <property type="entry name" value="Acylphosphatase-like_dom_sf"/>
</dbReference>
<dbReference type="InterPro" id="IPR007024">
    <property type="entry name" value="BLUF_domain"/>
</dbReference>
<dbReference type="InterPro" id="IPR050706">
    <property type="entry name" value="Cyclic-di-GMP_PDE-like"/>
</dbReference>
<dbReference type="InterPro" id="IPR001633">
    <property type="entry name" value="EAL_dom"/>
</dbReference>
<dbReference type="InterPro" id="IPR035919">
    <property type="entry name" value="EAL_sf"/>
</dbReference>
<dbReference type="PANTHER" id="PTHR33121:SF15">
    <property type="entry name" value="BLUE LIGHT- AND TEMPERATURE-REGULATED ANTIREPRESSOR BLUF"/>
    <property type="match status" value="1"/>
</dbReference>
<dbReference type="PANTHER" id="PTHR33121">
    <property type="entry name" value="CYCLIC DI-GMP PHOSPHODIESTERASE PDEF"/>
    <property type="match status" value="1"/>
</dbReference>
<dbReference type="Pfam" id="PF04940">
    <property type="entry name" value="BLUF"/>
    <property type="match status" value="1"/>
</dbReference>
<dbReference type="Pfam" id="PF00563">
    <property type="entry name" value="EAL"/>
    <property type="match status" value="1"/>
</dbReference>
<dbReference type="SMART" id="SM01034">
    <property type="entry name" value="BLUF"/>
    <property type="match status" value="1"/>
</dbReference>
<dbReference type="SMART" id="SM00052">
    <property type="entry name" value="EAL"/>
    <property type="match status" value="1"/>
</dbReference>
<dbReference type="SUPFAM" id="SSF54975">
    <property type="entry name" value="Acylphosphatase/BLUF domain-like"/>
    <property type="match status" value="1"/>
</dbReference>
<dbReference type="SUPFAM" id="SSF141868">
    <property type="entry name" value="EAL domain-like"/>
    <property type="match status" value="1"/>
</dbReference>
<dbReference type="PROSITE" id="PS50925">
    <property type="entry name" value="BLUF"/>
    <property type="match status" value="1"/>
</dbReference>
<dbReference type="PROSITE" id="PS50883">
    <property type="entry name" value="EAL"/>
    <property type="match status" value="1"/>
</dbReference>